<name>Y4248_SHEON</name>
<comment type="similarity">
    <text evidence="2">Belongs to the UPF0758 family.</text>
</comment>
<proteinExistence type="inferred from homology"/>
<protein>
    <recommendedName>
        <fullName>UPF0758 protein SO_4248</fullName>
    </recommendedName>
</protein>
<evidence type="ECO:0000255" key="1">
    <source>
        <dbReference type="PROSITE-ProRule" id="PRU01182"/>
    </source>
</evidence>
<evidence type="ECO:0000305" key="2"/>
<feature type="chain" id="PRO_0000190727" description="UPF0758 protein SO_4248">
    <location>
        <begin position="1"/>
        <end position="225"/>
    </location>
</feature>
<feature type="domain" description="MPN" evidence="1">
    <location>
        <begin position="102"/>
        <end position="224"/>
    </location>
</feature>
<feature type="short sequence motif" description="JAMM motif" evidence="1">
    <location>
        <begin position="173"/>
        <end position="186"/>
    </location>
</feature>
<feature type="binding site" evidence="1">
    <location>
        <position position="173"/>
    </location>
    <ligand>
        <name>Zn(2+)</name>
        <dbReference type="ChEBI" id="CHEBI:29105"/>
        <note>catalytic</note>
    </ligand>
</feature>
<feature type="binding site" evidence="1">
    <location>
        <position position="175"/>
    </location>
    <ligand>
        <name>Zn(2+)</name>
        <dbReference type="ChEBI" id="CHEBI:29105"/>
        <note>catalytic</note>
    </ligand>
</feature>
<feature type="binding site" evidence="1">
    <location>
        <position position="186"/>
    </location>
    <ligand>
        <name>Zn(2+)</name>
        <dbReference type="ChEBI" id="CHEBI:29105"/>
        <note>catalytic</note>
    </ligand>
</feature>
<accession>Q8E9M2</accession>
<sequence length="225" mass="24875">MAIKDWPEGEGPRDKLLLKGASHLSDAELLAVLLRNGLSGLNAVDLARSLIQEFGGLRSLLCAPKHQVCRLPGVGPVKYAQLQAAAELARRVAQENLQRGQVLTNPDLTRDYLMRQLADRSYEVFAILLLDSQHRVIQFVELFRGTIDSASVYPREVVSLVLEKKAAAVIVCHNHPSGIAEPSQADRRITERLKNALATIDVSLLDHMVVGDREIVSFAERGWIN</sequence>
<keyword id="KW-0378">Hydrolase</keyword>
<keyword id="KW-0479">Metal-binding</keyword>
<keyword id="KW-0482">Metalloprotease</keyword>
<keyword id="KW-0645">Protease</keyword>
<keyword id="KW-1185">Reference proteome</keyword>
<keyword id="KW-0862">Zinc</keyword>
<organism>
    <name type="scientific">Shewanella oneidensis (strain ATCC 700550 / JCM 31522 / CIP 106686 / LMG 19005 / NCIMB 14063 / MR-1)</name>
    <dbReference type="NCBI Taxonomy" id="211586"/>
    <lineage>
        <taxon>Bacteria</taxon>
        <taxon>Pseudomonadati</taxon>
        <taxon>Pseudomonadota</taxon>
        <taxon>Gammaproteobacteria</taxon>
        <taxon>Alteromonadales</taxon>
        <taxon>Shewanellaceae</taxon>
        <taxon>Shewanella</taxon>
    </lineage>
</organism>
<gene>
    <name type="ordered locus">SO_4248</name>
</gene>
<reference key="1">
    <citation type="journal article" date="2002" name="Nat. Biotechnol.">
        <title>Genome sequence of the dissimilatory metal ion-reducing bacterium Shewanella oneidensis.</title>
        <authorList>
            <person name="Heidelberg J.F."/>
            <person name="Paulsen I.T."/>
            <person name="Nelson K.E."/>
            <person name="Gaidos E.J."/>
            <person name="Nelson W.C."/>
            <person name="Read T.D."/>
            <person name="Eisen J.A."/>
            <person name="Seshadri R."/>
            <person name="Ward N.L."/>
            <person name="Methe B.A."/>
            <person name="Clayton R.A."/>
            <person name="Meyer T."/>
            <person name="Tsapin A."/>
            <person name="Scott J."/>
            <person name="Beanan M.J."/>
            <person name="Brinkac L.M."/>
            <person name="Daugherty S.C."/>
            <person name="DeBoy R.T."/>
            <person name="Dodson R.J."/>
            <person name="Durkin A.S."/>
            <person name="Haft D.H."/>
            <person name="Kolonay J.F."/>
            <person name="Madupu R."/>
            <person name="Peterson J.D."/>
            <person name="Umayam L.A."/>
            <person name="White O."/>
            <person name="Wolf A.M."/>
            <person name="Vamathevan J.J."/>
            <person name="Weidman J.F."/>
            <person name="Impraim M."/>
            <person name="Lee K."/>
            <person name="Berry K.J."/>
            <person name="Lee C."/>
            <person name="Mueller J."/>
            <person name="Khouri H.M."/>
            <person name="Gill J."/>
            <person name="Utterback T.R."/>
            <person name="McDonald L.A."/>
            <person name="Feldblyum T.V."/>
            <person name="Smith H.O."/>
            <person name="Venter J.C."/>
            <person name="Nealson K.H."/>
            <person name="Fraser C.M."/>
        </authorList>
    </citation>
    <scope>NUCLEOTIDE SEQUENCE [LARGE SCALE GENOMIC DNA]</scope>
    <source>
        <strain>ATCC 700550 / JCM 31522 / CIP 106686 / LMG 19005 / NCIMB 14063 / MR-1</strain>
    </source>
</reference>
<dbReference type="EMBL" id="AE014299">
    <property type="protein sequence ID" value="AAN57219.1"/>
    <property type="molecule type" value="Genomic_DNA"/>
</dbReference>
<dbReference type="RefSeq" id="NP_719775.1">
    <property type="nucleotide sequence ID" value="NC_004347.2"/>
</dbReference>
<dbReference type="SMR" id="Q8E9M2"/>
<dbReference type="STRING" id="211586.SO_4248"/>
<dbReference type="PaxDb" id="211586-SO_4248"/>
<dbReference type="KEGG" id="son:SO_4248"/>
<dbReference type="PATRIC" id="fig|211586.12.peg.4107"/>
<dbReference type="eggNOG" id="COG2003">
    <property type="taxonomic scope" value="Bacteria"/>
</dbReference>
<dbReference type="HOGENOM" id="CLU_073529_0_1_6"/>
<dbReference type="OrthoDB" id="9804482at2"/>
<dbReference type="PhylomeDB" id="Q8E9M2"/>
<dbReference type="BioCyc" id="SONE211586:G1GMP-3924-MONOMER"/>
<dbReference type="Proteomes" id="UP000008186">
    <property type="component" value="Chromosome"/>
</dbReference>
<dbReference type="GO" id="GO:0046872">
    <property type="term" value="F:metal ion binding"/>
    <property type="evidence" value="ECO:0007669"/>
    <property type="project" value="UniProtKB-KW"/>
</dbReference>
<dbReference type="GO" id="GO:0008237">
    <property type="term" value="F:metallopeptidase activity"/>
    <property type="evidence" value="ECO:0007669"/>
    <property type="project" value="UniProtKB-KW"/>
</dbReference>
<dbReference type="GO" id="GO:0006508">
    <property type="term" value="P:proteolysis"/>
    <property type="evidence" value="ECO:0007669"/>
    <property type="project" value="UniProtKB-KW"/>
</dbReference>
<dbReference type="CDD" id="cd08071">
    <property type="entry name" value="MPN_DUF2466"/>
    <property type="match status" value="1"/>
</dbReference>
<dbReference type="FunFam" id="3.40.140.10:FF:000032">
    <property type="entry name" value="DNA repair protein RadC"/>
    <property type="match status" value="1"/>
</dbReference>
<dbReference type="Gene3D" id="3.40.140.10">
    <property type="entry name" value="Cytidine Deaminase, domain 2"/>
    <property type="match status" value="1"/>
</dbReference>
<dbReference type="InterPro" id="IPR037518">
    <property type="entry name" value="MPN"/>
</dbReference>
<dbReference type="InterPro" id="IPR025657">
    <property type="entry name" value="RadC_JAB"/>
</dbReference>
<dbReference type="InterPro" id="IPR010994">
    <property type="entry name" value="RuvA_2-like"/>
</dbReference>
<dbReference type="InterPro" id="IPR001405">
    <property type="entry name" value="UPF0758"/>
</dbReference>
<dbReference type="InterPro" id="IPR020891">
    <property type="entry name" value="UPF0758_CS"/>
</dbReference>
<dbReference type="InterPro" id="IPR046778">
    <property type="entry name" value="UPF0758_N"/>
</dbReference>
<dbReference type="NCBIfam" id="NF000642">
    <property type="entry name" value="PRK00024.1"/>
    <property type="match status" value="1"/>
</dbReference>
<dbReference type="NCBIfam" id="TIGR00608">
    <property type="entry name" value="radc"/>
    <property type="match status" value="1"/>
</dbReference>
<dbReference type="PANTHER" id="PTHR30471">
    <property type="entry name" value="DNA REPAIR PROTEIN RADC"/>
    <property type="match status" value="1"/>
</dbReference>
<dbReference type="PANTHER" id="PTHR30471:SF3">
    <property type="entry name" value="UPF0758 PROTEIN YEES-RELATED"/>
    <property type="match status" value="1"/>
</dbReference>
<dbReference type="Pfam" id="PF04002">
    <property type="entry name" value="RadC"/>
    <property type="match status" value="1"/>
</dbReference>
<dbReference type="Pfam" id="PF20582">
    <property type="entry name" value="UPF0758_N"/>
    <property type="match status" value="1"/>
</dbReference>
<dbReference type="SUPFAM" id="SSF102712">
    <property type="entry name" value="JAB1/MPN domain"/>
    <property type="match status" value="1"/>
</dbReference>
<dbReference type="SUPFAM" id="SSF47781">
    <property type="entry name" value="RuvA domain 2-like"/>
    <property type="match status" value="1"/>
</dbReference>
<dbReference type="PROSITE" id="PS50249">
    <property type="entry name" value="MPN"/>
    <property type="match status" value="1"/>
</dbReference>
<dbReference type="PROSITE" id="PS01302">
    <property type="entry name" value="UPF0758"/>
    <property type="match status" value="1"/>
</dbReference>